<organism>
    <name type="scientific">Pseudomonas aeruginosa (strain ATCC 15692 / DSM 22644 / CIP 104116 / JCM 14847 / LMG 12228 / 1C / PRS 101 / PAO1)</name>
    <dbReference type="NCBI Taxonomy" id="208964"/>
    <lineage>
        <taxon>Bacteria</taxon>
        <taxon>Pseudomonadati</taxon>
        <taxon>Pseudomonadota</taxon>
        <taxon>Gammaproteobacteria</taxon>
        <taxon>Pseudomonadales</taxon>
        <taxon>Pseudomonadaceae</taxon>
        <taxon>Pseudomonas</taxon>
    </lineage>
</organism>
<accession>Q9I5Y4</accession>
<proteinExistence type="inferred from homology"/>
<dbReference type="EC" id="2.7.2.3" evidence="1"/>
<dbReference type="EMBL" id="AE004091">
    <property type="protein sequence ID" value="AAG03941.1"/>
    <property type="molecule type" value="Genomic_DNA"/>
</dbReference>
<dbReference type="PIR" id="F83577">
    <property type="entry name" value="F83577"/>
</dbReference>
<dbReference type="RefSeq" id="NP_249243.1">
    <property type="nucleotide sequence ID" value="NC_002516.2"/>
</dbReference>
<dbReference type="RefSeq" id="WP_003084960.1">
    <property type="nucleotide sequence ID" value="NZ_QZGE01000010.1"/>
</dbReference>
<dbReference type="SMR" id="Q9I5Y4"/>
<dbReference type="FunCoup" id="Q9I5Y4">
    <property type="interactions" value="660"/>
</dbReference>
<dbReference type="STRING" id="208964.PA0552"/>
<dbReference type="PaxDb" id="208964-PA0552"/>
<dbReference type="GeneID" id="879198"/>
<dbReference type="KEGG" id="pae:PA0552"/>
<dbReference type="PATRIC" id="fig|208964.12.peg.584"/>
<dbReference type="PseudoCAP" id="PA0552"/>
<dbReference type="HOGENOM" id="CLU_025427_0_2_6"/>
<dbReference type="InParanoid" id="Q9I5Y4"/>
<dbReference type="OrthoDB" id="9808460at2"/>
<dbReference type="PhylomeDB" id="Q9I5Y4"/>
<dbReference type="BioCyc" id="PAER208964:G1FZ6-558-MONOMER"/>
<dbReference type="UniPathway" id="UPA00109">
    <property type="reaction ID" value="UER00185"/>
</dbReference>
<dbReference type="Proteomes" id="UP000002438">
    <property type="component" value="Chromosome"/>
</dbReference>
<dbReference type="GO" id="GO:0005829">
    <property type="term" value="C:cytosol"/>
    <property type="evidence" value="ECO:0000318"/>
    <property type="project" value="GO_Central"/>
</dbReference>
<dbReference type="GO" id="GO:0043531">
    <property type="term" value="F:ADP binding"/>
    <property type="evidence" value="ECO:0000318"/>
    <property type="project" value="GO_Central"/>
</dbReference>
<dbReference type="GO" id="GO:0005524">
    <property type="term" value="F:ATP binding"/>
    <property type="evidence" value="ECO:0000318"/>
    <property type="project" value="GO_Central"/>
</dbReference>
<dbReference type="GO" id="GO:0004618">
    <property type="term" value="F:phosphoglycerate kinase activity"/>
    <property type="evidence" value="ECO:0000318"/>
    <property type="project" value="GO_Central"/>
</dbReference>
<dbReference type="GO" id="GO:0006094">
    <property type="term" value="P:gluconeogenesis"/>
    <property type="evidence" value="ECO:0000318"/>
    <property type="project" value="GO_Central"/>
</dbReference>
<dbReference type="GO" id="GO:0006096">
    <property type="term" value="P:glycolytic process"/>
    <property type="evidence" value="ECO:0000318"/>
    <property type="project" value="GO_Central"/>
</dbReference>
<dbReference type="FunFam" id="3.40.50.1260:FF:000001">
    <property type="entry name" value="Phosphoglycerate kinase"/>
    <property type="match status" value="1"/>
</dbReference>
<dbReference type="FunFam" id="3.40.50.1260:FF:000002">
    <property type="entry name" value="Phosphoglycerate kinase"/>
    <property type="match status" value="1"/>
</dbReference>
<dbReference type="Gene3D" id="3.40.50.1260">
    <property type="entry name" value="Phosphoglycerate kinase, N-terminal domain"/>
    <property type="match status" value="2"/>
</dbReference>
<dbReference type="HAMAP" id="MF_00145">
    <property type="entry name" value="Phosphoglyc_kinase"/>
    <property type="match status" value="1"/>
</dbReference>
<dbReference type="InterPro" id="IPR001576">
    <property type="entry name" value="Phosphoglycerate_kinase"/>
</dbReference>
<dbReference type="InterPro" id="IPR015911">
    <property type="entry name" value="Phosphoglycerate_kinase_CS"/>
</dbReference>
<dbReference type="InterPro" id="IPR015824">
    <property type="entry name" value="Phosphoglycerate_kinase_N"/>
</dbReference>
<dbReference type="InterPro" id="IPR036043">
    <property type="entry name" value="Phosphoglycerate_kinase_sf"/>
</dbReference>
<dbReference type="PANTHER" id="PTHR11406">
    <property type="entry name" value="PHOSPHOGLYCERATE KINASE"/>
    <property type="match status" value="1"/>
</dbReference>
<dbReference type="PANTHER" id="PTHR11406:SF23">
    <property type="entry name" value="PHOSPHOGLYCERATE KINASE 1, CHLOROPLASTIC-RELATED"/>
    <property type="match status" value="1"/>
</dbReference>
<dbReference type="Pfam" id="PF00162">
    <property type="entry name" value="PGK"/>
    <property type="match status" value="1"/>
</dbReference>
<dbReference type="PIRSF" id="PIRSF000724">
    <property type="entry name" value="Pgk"/>
    <property type="match status" value="1"/>
</dbReference>
<dbReference type="PRINTS" id="PR00477">
    <property type="entry name" value="PHGLYCKINASE"/>
</dbReference>
<dbReference type="SUPFAM" id="SSF53748">
    <property type="entry name" value="Phosphoglycerate kinase"/>
    <property type="match status" value="1"/>
</dbReference>
<dbReference type="PROSITE" id="PS00111">
    <property type="entry name" value="PGLYCERATE_KINASE"/>
    <property type="match status" value="1"/>
</dbReference>
<reference key="1">
    <citation type="journal article" date="2000" name="Nature">
        <title>Complete genome sequence of Pseudomonas aeruginosa PAO1, an opportunistic pathogen.</title>
        <authorList>
            <person name="Stover C.K."/>
            <person name="Pham X.-Q.T."/>
            <person name="Erwin A.L."/>
            <person name="Mizoguchi S.D."/>
            <person name="Warrener P."/>
            <person name="Hickey M.J."/>
            <person name="Brinkman F.S.L."/>
            <person name="Hufnagle W.O."/>
            <person name="Kowalik D.J."/>
            <person name="Lagrou M."/>
            <person name="Garber R.L."/>
            <person name="Goltry L."/>
            <person name="Tolentino E."/>
            <person name="Westbrock-Wadman S."/>
            <person name="Yuan Y."/>
            <person name="Brody L.L."/>
            <person name="Coulter S.N."/>
            <person name="Folger K.R."/>
            <person name="Kas A."/>
            <person name="Larbig K."/>
            <person name="Lim R.M."/>
            <person name="Smith K.A."/>
            <person name="Spencer D.H."/>
            <person name="Wong G.K.-S."/>
            <person name="Wu Z."/>
            <person name="Paulsen I.T."/>
            <person name="Reizer J."/>
            <person name="Saier M.H. Jr."/>
            <person name="Hancock R.E.W."/>
            <person name="Lory S."/>
            <person name="Olson M.V."/>
        </authorList>
    </citation>
    <scope>NUCLEOTIDE SEQUENCE [LARGE SCALE GENOMIC DNA]</scope>
    <source>
        <strain>ATCC 15692 / DSM 22644 / CIP 104116 / JCM 14847 / LMG 12228 / 1C / PRS 101 / PAO1</strain>
    </source>
</reference>
<evidence type="ECO:0000255" key="1">
    <source>
        <dbReference type="HAMAP-Rule" id="MF_00145"/>
    </source>
</evidence>
<protein>
    <recommendedName>
        <fullName evidence="1">Phosphoglycerate kinase</fullName>
        <ecNumber evidence="1">2.7.2.3</ecNumber>
    </recommendedName>
</protein>
<name>PGK_PSEAE</name>
<gene>
    <name evidence="1" type="primary">pgk</name>
    <name type="ordered locus">PA0552</name>
</gene>
<comment type="catalytic activity">
    <reaction evidence="1">
        <text>(2R)-3-phosphoglycerate + ATP = (2R)-3-phospho-glyceroyl phosphate + ADP</text>
        <dbReference type="Rhea" id="RHEA:14801"/>
        <dbReference type="ChEBI" id="CHEBI:30616"/>
        <dbReference type="ChEBI" id="CHEBI:57604"/>
        <dbReference type="ChEBI" id="CHEBI:58272"/>
        <dbReference type="ChEBI" id="CHEBI:456216"/>
        <dbReference type="EC" id="2.7.2.3"/>
    </reaction>
</comment>
<comment type="pathway">
    <text evidence="1">Carbohydrate degradation; glycolysis; pyruvate from D-glyceraldehyde 3-phosphate: step 2/5.</text>
</comment>
<comment type="subunit">
    <text evidence="1">Monomer.</text>
</comment>
<comment type="subcellular location">
    <subcellularLocation>
        <location evidence="1">Cytoplasm</location>
    </subcellularLocation>
</comment>
<comment type="similarity">
    <text evidence="1">Belongs to the phosphoglycerate kinase family.</text>
</comment>
<keyword id="KW-0067">ATP-binding</keyword>
<keyword id="KW-0963">Cytoplasm</keyword>
<keyword id="KW-0324">Glycolysis</keyword>
<keyword id="KW-0418">Kinase</keyword>
<keyword id="KW-0547">Nucleotide-binding</keyword>
<keyword id="KW-1185">Reference proteome</keyword>
<keyword id="KW-0808">Transferase</keyword>
<feature type="chain" id="PRO_0000145988" description="Phosphoglycerate kinase">
    <location>
        <begin position="1"/>
        <end position="387"/>
    </location>
</feature>
<feature type="binding site" evidence="1">
    <location>
        <begin position="21"/>
        <end position="23"/>
    </location>
    <ligand>
        <name>substrate</name>
    </ligand>
</feature>
<feature type="binding site" evidence="1">
    <location>
        <position position="36"/>
    </location>
    <ligand>
        <name>substrate</name>
    </ligand>
</feature>
<feature type="binding site" evidence="1">
    <location>
        <begin position="59"/>
        <end position="62"/>
    </location>
    <ligand>
        <name>substrate</name>
    </ligand>
</feature>
<feature type="binding site" evidence="1">
    <location>
        <position position="113"/>
    </location>
    <ligand>
        <name>substrate</name>
    </ligand>
</feature>
<feature type="binding site" evidence="1">
    <location>
        <position position="146"/>
    </location>
    <ligand>
        <name>substrate</name>
    </ligand>
</feature>
<feature type="binding site" evidence="1">
    <location>
        <position position="197"/>
    </location>
    <ligand>
        <name>ATP</name>
        <dbReference type="ChEBI" id="CHEBI:30616"/>
    </ligand>
</feature>
<feature type="binding site" evidence="1">
    <location>
        <position position="314"/>
    </location>
    <ligand>
        <name>ATP</name>
        <dbReference type="ChEBI" id="CHEBI:30616"/>
    </ligand>
</feature>
<feature type="binding site" evidence="1">
    <location>
        <begin position="340"/>
        <end position="343"/>
    </location>
    <ligand>
        <name>ATP</name>
        <dbReference type="ChEBI" id="CHEBI:30616"/>
    </ligand>
</feature>
<sequence length="387" mass="40405">MTVLKMTDLDLKGKRVLIREDLNVPVKDGQVQSDARIKAALPTLKLALEKGAAVMVCSHLGRPTEGEFSAENSLKPVAEYLSKALGREVPLLADYLDGVEVKAGDLVLFENVRFNKGEKKNADELAQKYAALCDVFVMDAFGTAHRAEGSTHGVARFAKVAAAGPLLAAELDALGKALGNPARPMAAIVAGSKVSTKLDVLNSLAGICDQLIVGGGIANTFLAAAGHKVGKSLYEADLVETAKAIAAKVKVPLPVDVVVAKEFAESAVATVKAIAEVADDDMILDIGPQTAAQFAELLKTSKTILWNGPVGVFEFDQFGEGTRTLANAIADSAAFSIAGGGDTLAAIDKYGIAERISYISTGGGAFLEFVEGKVLPAVEILEQRAKG</sequence>